<keyword id="KW-0687">Ribonucleoprotein</keyword>
<keyword id="KW-0689">Ribosomal protein</keyword>
<keyword id="KW-0694">RNA-binding</keyword>
<keyword id="KW-0699">rRNA-binding</keyword>
<comment type="function">
    <text evidence="1">One of the primary rRNA binding proteins, it binds directly to 16S rRNA where it helps nucleate assembly of the platform of the 30S subunit by binding and bridging several RNA helices of the 16S rRNA.</text>
</comment>
<comment type="function">
    <text evidence="1">Forms an intersubunit bridge (bridge B4) with the 23S rRNA of the 50S subunit in the ribosome.</text>
</comment>
<comment type="subunit">
    <text evidence="1">Part of the 30S ribosomal subunit. Forms a bridge to the 50S subunit in the 70S ribosome, contacting the 23S rRNA.</text>
</comment>
<comment type="similarity">
    <text evidence="1">Belongs to the universal ribosomal protein uS15 family.</text>
</comment>
<accession>Q2VZQ5</accession>
<name>RS15_PARM1</name>
<evidence type="ECO:0000255" key="1">
    <source>
        <dbReference type="HAMAP-Rule" id="MF_01343"/>
    </source>
</evidence>
<evidence type="ECO:0000305" key="2"/>
<protein>
    <recommendedName>
        <fullName evidence="1">Small ribosomal subunit protein uS15</fullName>
    </recommendedName>
    <alternativeName>
        <fullName evidence="2">30S ribosomal protein S15</fullName>
    </alternativeName>
</protein>
<sequence>MSITAERTQELVKEYATKEGDTGSAEVQVAILSERIRNLTEHLKSHKKDFHSRRGLLIMVGQRRRMLDYLKAKDNKRYEGLIGRLGLRK</sequence>
<gene>
    <name evidence="1" type="primary">rpsO</name>
    <name type="ordered locus">amb4116</name>
</gene>
<feature type="chain" id="PRO_0000255503" description="Small ribosomal subunit protein uS15">
    <location>
        <begin position="1"/>
        <end position="89"/>
    </location>
</feature>
<reference key="1">
    <citation type="journal article" date="2005" name="DNA Res.">
        <title>Complete genome sequence of the facultative anaerobic magnetotactic bacterium Magnetospirillum sp. strain AMB-1.</title>
        <authorList>
            <person name="Matsunaga T."/>
            <person name="Okamura Y."/>
            <person name="Fukuda Y."/>
            <person name="Wahyudi A.T."/>
            <person name="Murase Y."/>
            <person name="Takeyama H."/>
        </authorList>
    </citation>
    <scope>NUCLEOTIDE SEQUENCE [LARGE SCALE GENOMIC DNA]</scope>
    <source>
        <strain>ATCC 700264 / AMB-1</strain>
    </source>
</reference>
<organism>
    <name type="scientific">Paramagnetospirillum magneticum (strain ATCC 700264 / AMB-1)</name>
    <name type="common">Magnetospirillum magneticum</name>
    <dbReference type="NCBI Taxonomy" id="342108"/>
    <lineage>
        <taxon>Bacteria</taxon>
        <taxon>Pseudomonadati</taxon>
        <taxon>Pseudomonadota</taxon>
        <taxon>Alphaproteobacteria</taxon>
        <taxon>Rhodospirillales</taxon>
        <taxon>Magnetospirillaceae</taxon>
        <taxon>Paramagnetospirillum</taxon>
    </lineage>
</organism>
<dbReference type="EMBL" id="AP007255">
    <property type="protein sequence ID" value="BAE52920.1"/>
    <property type="molecule type" value="Genomic_DNA"/>
</dbReference>
<dbReference type="RefSeq" id="WP_008616454.1">
    <property type="nucleotide sequence ID" value="NC_007626.1"/>
</dbReference>
<dbReference type="SMR" id="Q2VZQ5"/>
<dbReference type="STRING" id="342108.amb4116"/>
<dbReference type="KEGG" id="mag:amb4116"/>
<dbReference type="HOGENOM" id="CLU_148518_0_0_5"/>
<dbReference type="OrthoDB" id="9799262at2"/>
<dbReference type="Proteomes" id="UP000007058">
    <property type="component" value="Chromosome"/>
</dbReference>
<dbReference type="GO" id="GO:0022627">
    <property type="term" value="C:cytosolic small ribosomal subunit"/>
    <property type="evidence" value="ECO:0007669"/>
    <property type="project" value="TreeGrafter"/>
</dbReference>
<dbReference type="GO" id="GO:0019843">
    <property type="term" value="F:rRNA binding"/>
    <property type="evidence" value="ECO:0007669"/>
    <property type="project" value="UniProtKB-UniRule"/>
</dbReference>
<dbReference type="GO" id="GO:0003735">
    <property type="term" value="F:structural constituent of ribosome"/>
    <property type="evidence" value="ECO:0007669"/>
    <property type="project" value="InterPro"/>
</dbReference>
<dbReference type="GO" id="GO:0006412">
    <property type="term" value="P:translation"/>
    <property type="evidence" value="ECO:0007669"/>
    <property type="project" value="UniProtKB-UniRule"/>
</dbReference>
<dbReference type="CDD" id="cd00353">
    <property type="entry name" value="Ribosomal_S15p_S13e"/>
    <property type="match status" value="1"/>
</dbReference>
<dbReference type="FunFam" id="1.10.287.10:FF:000002">
    <property type="entry name" value="30S ribosomal protein S15"/>
    <property type="match status" value="1"/>
</dbReference>
<dbReference type="Gene3D" id="6.10.250.3130">
    <property type="match status" value="1"/>
</dbReference>
<dbReference type="Gene3D" id="1.10.287.10">
    <property type="entry name" value="S15/NS1, RNA-binding"/>
    <property type="match status" value="1"/>
</dbReference>
<dbReference type="HAMAP" id="MF_01343_B">
    <property type="entry name" value="Ribosomal_uS15_B"/>
    <property type="match status" value="1"/>
</dbReference>
<dbReference type="InterPro" id="IPR000589">
    <property type="entry name" value="Ribosomal_uS15"/>
</dbReference>
<dbReference type="InterPro" id="IPR005290">
    <property type="entry name" value="Ribosomal_uS15_bac-type"/>
</dbReference>
<dbReference type="InterPro" id="IPR009068">
    <property type="entry name" value="uS15_NS1_RNA-bd_sf"/>
</dbReference>
<dbReference type="NCBIfam" id="TIGR00952">
    <property type="entry name" value="S15_bact"/>
    <property type="match status" value="1"/>
</dbReference>
<dbReference type="PANTHER" id="PTHR23321">
    <property type="entry name" value="RIBOSOMAL PROTEIN S15, BACTERIAL AND ORGANELLAR"/>
    <property type="match status" value="1"/>
</dbReference>
<dbReference type="PANTHER" id="PTHR23321:SF26">
    <property type="entry name" value="SMALL RIBOSOMAL SUBUNIT PROTEIN US15M"/>
    <property type="match status" value="1"/>
</dbReference>
<dbReference type="Pfam" id="PF00312">
    <property type="entry name" value="Ribosomal_S15"/>
    <property type="match status" value="1"/>
</dbReference>
<dbReference type="SMART" id="SM01387">
    <property type="entry name" value="Ribosomal_S15"/>
    <property type="match status" value="1"/>
</dbReference>
<dbReference type="SUPFAM" id="SSF47060">
    <property type="entry name" value="S15/NS1 RNA-binding domain"/>
    <property type="match status" value="1"/>
</dbReference>
<dbReference type="PROSITE" id="PS00362">
    <property type="entry name" value="RIBOSOMAL_S15"/>
    <property type="match status" value="1"/>
</dbReference>
<proteinExistence type="inferred from homology"/>